<name>RS12_HAEIN</name>
<reference key="1">
    <citation type="journal article" date="1992" name="J. Bacteriol.">
        <title>Cloning, characterization, and DNA base sequence of the high-level streptomycin resistance gene strA1 of Haemophilus influenzae Rd.</title>
        <authorList>
            <person name="Stuy J.H."/>
            <person name="Walter R.B."/>
        </authorList>
    </citation>
    <scope>NUCLEOTIDE SEQUENCE [GENOMIC DNA]</scope>
    <scope>VARIANTS STREPTOMYCIN RESISTANT ARG-43 AND VAL-81</scope>
    <source>
        <strain>Rd / BC200</strain>
    </source>
</reference>
<reference key="2">
    <citation type="journal article" date="1995" name="Science">
        <title>Whole-genome random sequencing and assembly of Haemophilus influenzae Rd.</title>
        <authorList>
            <person name="Fleischmann R.D."/>
            <person name="Adams M.D."/>
            <person name="White O."/>
            <person name="Clayton R.A."/>
            <person name="Kirkness E.F."/>
            <person name="Kerlavage A.R."/>
            <person name="Bult C.J."/>
            <person name="Tomb J.-F."/>
            <person name="Dougherty B.A."/>
            <person name="Merrick J.M."/>
            <person name="McKenney K."/>
            <person name="Sutton G.G."/>
            <person name="FitzHugh W."/>
            <person name="Fields C.A."/>
            <person name="Gocayne J.D."/>
            <person name="Scott J.D."/>
            <person name="Shirley R."/>
            <person name="Liu L.-I."/>
            <person name="Glodek A."/>
            <person name="Kelley J.M."/>
            <person name="Weidman J.F."/>
            <person name="Phillips C.A."/>
            <person name="Spriggs T."/>
            <person name="Hedblom E."/>
            <person name="Cotton M.D."/>
            <person name="Utterback T.R."/>
            <person name="Hanna M.C."/>
            <person name="Nguyen D.T."/>
            <person name="Saudek D.M."/>
            <person name="Brandon R.C."/>
            <person name="Fine L.D."/>
            <person name="Fritchman J.L."/>
            <person name="Fuhrmann J.L."/>
            <person name="Geoghagen N.S.M."/>
            <person name="Gnehm C.L."/>
            <person name="McDonald L.A."/>
            <person name="Small K.V."/>
            <person name="Fraser C.M."/>
            <person name="Smith H.O."/>
            <person name="Venter J.C."/>
        </authorList>
    </citation>
    <scope>NUCLEOTIDE SEQUENCE [LARGE SCALE GENOMIC DNA]</scope>
    <source>
        <strain>ATCC 51907 / DSM 11121 / KW20 / Rd</strain>
    </source>
</reference>
<sequence>MATINQLVRKPRVKKVVKSNVPALEACPQKRGVCTRVYTTTPKKPNSALRKVCRIRLTNGFEVTSYIGGEGHNLQEHSVVLIRGGRVKDLPGVRYHTVRGALDCAGVKDRKQGRSKYGVKRPKA</sequence>
<accession>P63196</accession>
<accession>P44412</accession>
<protein>
    <recommendedName>
        <fullName evidence="3">Small ribosomal subunit protein uS12</fullName>
    </recommendedName>
    <alternativeName>
        <fullName>30S ribosomal protein S12</fullName>
    </alternativeName>
    <alternativeName>
        <fullName>Streptomycin resistance protein</fullName>
    </alternativeName>
</protein>
<feature type="initiator methionine" description="Removed" evidence="1">
    <location>
        <position position="1"/>
    </location>
</feature>
<feature type="chain" id="PRO_0000146232" description="Small ribosomal subunit protein uS12">
    <location>
        <begin position="2"/>
        <end position="124"/>
    </location>
</feature>
<feature type="modified residue" description="3-methylthioaspartic acid" evidence="1">
    <location>
        <position position="89"/>
    </location>
</feature>
<feature type="sequence variant" description="In streptomycin resistant strA1." evidence="2">
    <original>K</original>
    <variation>R</variation>
    <location>
        <position position="43"/>
    </location>
</feature>
<feature type="sequence variant" description="In streptomycin resistant stra1." evidence="2">
    <original>L</original>
    <variation>V</variation>
    <location>
        <position position="81"/>
    </location>
</feature>
<evidence type="ECO:0000250" key="1"/>
<evidence type="ECO:0000269" key="2">
    <source>
    </source>
</evidence>
<evidence type="ECO:0000305" key="3"/>
<comment type="function">
    <text evidence="1">With S4 and S5 plays an important role in translational accuracy.</text>
</comment>
<comment type="function">
    <text evidence="1">Interacts with and stabilizes bases of the 16S rRNA that are involved in tRNA selection in the A site and with the mRNA backbone. Located at the interface of the 30S and 50S subunits, it traverses the body of the 30S subunit contacting proteins on the other side and probably holding the rRNA structure together. The combined cluster of proteins S8, S12 and S17 appears to hold together the shoulder and platform of the 30S subunit (By similarity).</text>
</comment>
<comment type="subunit">
    <text evidence="1">Part of the 30S ribosomal subunit. Contacts proteins S8 and S17. May interact with IF1 in the 30S initiation complex (By similarity).</text>
</comment>
<comment type="similarity">
    <text evidence="3">Belongs to the universal ribosomal protein uS12 family.</text>
</comment>
<dbReference type="EMBL" id="M86701">
    <property type="protein sequence ID" value="AAA25003.1"/>
    <property type="molecule type" value="Genomic_DNA"/>
</dbReference>
<dbReference type="EMBL" id="M86702">
    <property type="protein sequence ID" value="AAA25004.1"/>
    <property type="molecule type" value="Genomic_DNA"/>
</dbReference>
<dbReference type="EMBL" id="L42023">
    <property type="protein sequence ID" value="AAC22239.1"/>
    <property type="molecule type" value="Genomic_DNA"/>
</dbReference>
<dbReference type="PIR" id="B42939">
    <property type="entry name" value="A42939"/>
</dbReference>
<dbReference type="RefSeq" id="NP_438739.1">
    <property type="nucleotide sequence ID" value="NC_000907.1"/>
</dbReference>
<dbReference type="SMR" id="P63196"/>
<dbReference type="STRING" id="71421.HI_0581"/>
<dbReference type="EnsemblBacteria" id="AAC22239">
    <property type="protein sequence ID" value="AAC22239"/>
    <property type="gene ID" value="HI_0581"/>
</dbReference>
<dbReference type="KEGG" id="hin:HI_0581"/>
<dbReference type="PATRIC" id="fig|71421.8.peg.602"/>
<dbReference type="eggNOG" id="COG0048">
    <property type="taxonomic scope" value="Bacteria"/>
</dbReference>
<dbReference type="HOGENOM" id="CLU_104295_1_2_6"/>
<dbReference type="OrthoDB" id="9802366at2"/>
<dbReference type="PhylomeDB" id="P63196"/>
<dbReference type="BioCyc" id="HINF71421:G1GJ1-594-MONOMER"/>
<dbReference type="PRO" id="PR:P63196"/>
<dbReference type="Proteomes" id="UP000000579">
    <property type="component" value="Chromosome"/>
</dbReference>
<dbReference type="GO" id="GO:0005840">
    <property type="term" value="C:ribosome"/>
    <property type="evidence" value="ECO:0000318"/>
    <property type="project" value="GO_Central"/>
</dbReference>
<dbReference type="GO" id="GO:0015935">
    <property type="term" value="C:small ribosomal subunit"/>
    <property type="evidence" value="ECO:0007669"/>
    <property type="project" value="InterPro"/>
</dbReference>
<dbReference type="GO" id="GO:0019843">
    <property type="term" value="F:rRNA binding"/>
    <property type="evidence" value="ECO:0007669"/>
    <property type="project" value="UniProtKB-UniRule"/>
</dbReference>
<dbReference type="GO" id="GO:0003735">
    <property type="term" value="F:structural constituent of ribosome"/>
    <property type="evidence" value="ECO:0000318"/>
    <property type="project" value="GO_Central"/>
</dbReference>
<dbReference type="GO" id="GO:0000049">
    <property type="term" value="F:tRNA binding"/>
    <property type="evidence" value="ECO:0007669"/>
    <property type="project" value="UniProtKB-UniRule"/>
</dbReference>
<dbReference type="GO" id="GO:0046677">
    <property type="term" value="P:response to antibiotic"/>
    <property type="evidence" value="ECO:0007669"/>
    <property type="project" value="UniProtKB-KW"/>
</dbReference>
<dbReference type="GO" id="GO:0006412">
    <property type="term" value="P:translation"/>
    <property type="evidence" value="ECO:0000318"/>
    <property type="project" value="GO_Central"/>
</dbReference>
<dbReference type="CDD" id="cd03368">
    <property type="entry name" value="Ribosomal_S12"/>
    <property type="match status" value="1"/>
</dbReference>
<dbReference type="FunFam" id="2.40.50.140:FF:000001">
    <property type="entry name" value="30S ribosomal protein S12"/>
    <property type="match status" value="1"/>
</dbReference>
<dbReference type="Gene3D" id="2.40.50.140">
    <property type="entry name" value="Nucleic acid-binding proteins"/>
    <property type="match status" value="1"/>
</dbReference>
<dbReference type="HAMAP" id="MF_00403_B">
    <property type="entry name" value="Ribosomal_uS12_B"/>
    <property type="match status" value="1"/>
</dbReference>
<dbReference type="InterPro" id="IPR012340">
    <property type="entry name" value="NA-bd_OB-fold"/>
</dbReference>
<dbReference type="InterPro" id="IPR006032">
    <property type="entry name" value="Ribosomal_uS12"/>
</dbReference>
<dbReference type="InterPro" id="IPR005679">
    <property type="entry name" value="Ribosomal_uS12_bac"/>
</dbReference>
<dbReference type="NCBIfam" id="TIGR00981">
    <property type="entry name" value="rpsL_bact"/>
    <property type="match status" value="1"/>
</dbReference>
<dbReference type="PANTHER" id="PTHR11652">
    <property type="entry name" value="30S RIBOSOMAL PROTEIN S12 FAMILY MEMBER"/>
    <property type="match status" value="1"/>
</dbReference>
<dbReference type="Pfam" id="PF00164">
    <property type="entry name" value="Ribosom_S12_S23"/>
    <property type="match status" value="1"/>
</dbReference>
<dbReference type="PIRSF" id="PIRSF002133">
    <property type="entry name" value="Ribosomal_S12/S23"/>
    <property type="match status" value="1"/>
</dbReference>
<dbReference type="PRINTS" id="PR01034">
    <property type="entry name" value="RIBOSOMALS12"/>
</dbReference>
<dbReference type="SUPFAM" id="SSF50249">
    <property type="entry name" value="Nucleic acid-binding proteins"/>
    <property type="match status" value="1"/>
</dbReference>
<dbReference type="PROSITE" id="PS00055">
    <property type="entry name" value="RIBOSOMAL_S12"/>
    <property type="match status" value="1"/>
</dbReference>
<proteinExistence type="inferred from homology"/>
<organism>
    <name type="scientific">Haemophilus influenzae (strain ATCC 51907 / DSM 11121 / KW20 / Rd)</name>
    <dbReference type="NCBI Taxonomy" id="71421"/>
    <lineage>
        <taxon>Bacteria</taxon>
        <taxon>Pseudomonadati</taxon>
        <taxon>Pseudomonadota</taxon>
        <taxon>Gammaproteobacteria</taxon>
        <taxon>Pasteurellales</taxon>
        <taxon>Pasteurellaceae</taxon>
        <taxon>Haemophilus</taxon>
    </lineage>
</organism>
<keyword id="KW-0046">Antibiotic resistance</keyword>
<keyword id="KW-0488">Methylation</keyword>
<keyword id="KW-1185">Reference proteome</keyword>
<keyword id="KW-0687">Ribonucleoprotein</keyword>
<keyword id="KW-0689">Ribosomal protein</keyword>
<keyword id="KW-0694">RNA-binding</keyword>
<keyword id="KW-0699">rRNA-binding</keyword>
<keyword id="KW-0820">tRNA-binding</keyword>
<gene>
    <name type="primary">rpsL</name>
    <name type="synonym">rps12</name>
    <name type="synonym">strA</name>
    <name type="ordered locus">HI_0581</name>
</gene>